<name>GHRB_YERP3</name>
<accession>A7FPA2</accession>
<evidence type="ECO:0000255" key="1">
    <source>
        <dbReference type="HAMAP-Rule" id="MF_01667"/>
    </source>
</evidence>
<feature type="chain" id="PRO_0000348413" description="Glyoxylate/hydroxypyruvate reductase B">
    <location>
        <begin position="1"/>
        <end position="326"/>
    </location>
</feature>
<feature type="active site" evidence="1">
    <location>
        <position position="237"/>
    </location>
</feature>
<feature type="active site" evidence="1">
    <location>
        <position position="266"/>
    </location>
</feature>
<feature type="active site" description="Proton donor" evidence="1">
    <location>
        <position position="285"/>
    </location>
</feature>
<comment type="function">
    <text evidence="1">Catalyzes the NADPH-dependent reduction of glyoxylate and hydroxypyruvate into glycolate and glycerate, respectively.</text>
</comment>
<comment type="catalytic activity">
    <reaction evidence="1">
        <text>glycolate + NADP(+) = glyoxylate + NADPH + H(+)</text>
        <dbReference type="Rhea" id="RHEA:10992"/>
        <dbReference type="ChEBI" id="CHEBI:15378"/>
        <dbReference type="ChEBI" id="CHEBI:29805"/>
        <dbReference type="ChEBI" id="CHEBI:36655"/>
        <dbReference type="ChEBI" id="CHEBI:57783"/>
        <dbReference type="ChEBI" id="CHEBI:58349"/>
        <dbReference type="EC" id="1.1.1.79"/>
    </reaction>
</comment>
<comment type="catalytic activity">
    <reaction evidence="1">
        <text>(R)-glycerate + NAD(+) = 3-hydroxypyruvate + NADH + H(+)</text>
        <dbReference type="Rhea" id="RHEA:17905"/>
        <dbReference type="ChEBI" id="CHEBI:15378"/>
        <dbReference type="ChEBI" id="CHEBI:16659"/>
        <dbReference type="ChEBI" id="CHEBI:17180"/>
        <dbReference type="ChEBI" id="CHEBI:57540"/>
        <dbReference type="ChEBI" id="CHEBI:57945"/>
        <dbReference type="EC" id="1.1.1.81"/>
    </reaction>
</comment>
<comment type="catalytic activity">
    <reaction evidence="1">
        <text>(R)-glycerate + NADP(+) = 3-hydroxypyruvate + NADPH + H(+)</text>
        <dbReference type="Rhea" id="RHEA:18657"/>
        <dbReference type="ChEBI" id="CHEBI:15378"/>
        <dbReference type="ChEBI" id="CHEBI:16659"/>
        <dbReference type="ChEBI" id="CHEBI:17180"/>
        <dbReference type="ChEBI" id="CHEBI:57783"/>
        <dbReference type="ChEBI" id="CHEBI:58349"/>
        <dbReference type="EC" id="1.1.1.81"/>
    </reaction>
</comment>
<comment type="subunit">
    <text evidence="1">Homodimer.</text>
</comment>
<comment type="subcellular location">
    <subcellularLocation>
        <location evidence="1">Cytoplasm</location>
    </subcellularLocation>
</comment>
<comment type="similarity">
    <text evidence="1">Belongs to the D-isomer specific 2-hydroxyacid dehydrogenase family. GhrB subfamily.</text>
</comment>
<gene>
    <name evidence="1" type="primary">ghrB</name>
    <name type="ordered locus">YpsIP31758_4137</name>
</gene>
<proteinExistence type="inferred from homology"/>
<sequence>MKPSIVLYKSIPTDLHQRLAQHFTVNSFDGLTPDNQPELLAALQQAEGLIGSGGKIDQDFLQLAPNLRAASTISVGYDNFDVEALSQRGIALMHTPTVLTETVADTMMALMLSTARRVVELAERVKAGEWQESIGDDWFGVDVHHKTIGILGMGRIGMALAQRAHFGFSMPVLYTSRRPHEAAEQRFGARHCSLDTLLAEADFLCITLPMTEQTYHMIGREQLAKMKSSAILINAGRGPVVDEQALIAALQDGTIHAAGLDVFEQEPLPVDSPLLTLRNVVAVPHIGSATHETRYNMAACAVDNLINALTGTVKENCVNPQVLITH</sequence>
<organism>
    <name type="scientific">Yersinia pseudotuberculosis serotype O:1b (strain IP 31758)</name>
    <dbReference type="NCBI Taxonomy" id="349747"/>
    <lineage>
        <taxon>Bacteria</taxon>
        <taxon>Pseudomonadati</taxon>
        <taxon>Pseudomonadota</taxon>
        <taxon>Gammaproteobacteria</taxon>
        <taxon>Enterobacterales</taxon>
        <taxon>Yersiniaceae</taxon>
        <taxon>Yersinia</taxon>
    </lineage>
</organism>
<keyword id="KW-0963">Cytoplasm</keyword>
<keyword id="KW-0520">NAD</keyword>
<keyword id="KW-0521">NADP</keyword>
<keyword id="KW-0560">Oxidoreductase</keyword>
<protein>
    <recommendedName>
        <fullName evidence="1">Glyoxylate/hydroxypyruvate reductase B</fullName>
        <ecNumber evidence="1">1.1.1.79</ecNumber>
        <ecNumber evidence="1">1.1.1.81</ecNumber>
    </recommendedName>
</protein>
<reference key="1">
    <citation type="journal article" date="2007" name="PLoS Genet.">
        <title>The complete genome sequence of Yersinia pseudotuberculosis IP31758, the causative agent of Far East scarlet-like fever.</title>
        <authorList>
            <person name="Eppinger M."/>
            <person name="Rosovitz M.J."/>
            <person name="Fricke W.F."/>
            <person name="Rasko D.A."/>
            <person name="Kokorina G."/>
            <person name="Fayolle C."/>
            <person name="Lindler L.E."/>
            <person name="Carniel E."/>
            <person name="Ravel J."/>
        </authorList>
    </citation>
    <scope>NUCLEOTIDE SEQUENCE [LARGE SCALE GENOMIC DNA]</scope>
    <source>
        <strain>IP 31758</strain>
    </source>
</reference>
<dbReference type="EC" id="1.1.1.79" evidence="1"/>
<dbReference type="EC" id="1.1.1.81" evidence="1"/>
<dbReference type="EMBL" id="CP000720">
    <property type="protein sequence ID" value="ABS47205.1"/>
    <property type="molecule type" value="Genomic_DNA"/>
</dbReference>
<dbReference type="RefSeq" id="WP_002209630.1">
    <property type="nucleotide sequence ID" value="NC_009708.1"/>
</dbReference>
<dbReference type="SMR" id="A7FPA2"/>
<dbReference type="GeneID" id="57974639"/>
<dbReference type="KEGG" id="ypi:YpsIP31758_4137"/>
<dbReference type="HOGENOM" id="CLU_019796_1_2_6"/>
<dbReference type="Proteomes" id="UP000002412">
    <property type="component" value="Chromosome"/>
</dbReference>
<dbReference type="GO" id="GO:0005829">
    <property type="term" value="C:cytosol"/>
    <property type="evidence" value="ECO:0007669"/>
    <property type="project" value="TreeGrafter"/>
</dbReference>
<dbReference type="GO" id="GO:0005886">
    <property type="term" value="C:plasma membrane"/>
    <property type="evidence" value="ECO:0007669"/>
    <property type="project" value="UniProtKB-UniRule"/>
</dbReference>
<dbReference type="GO" id="GO:0030267">
    <property type="term" value="F:glyoxylate reductase (NADPH) activity"/>
    <property type="evidence" value="ECO:0007669"/>
    <property type="project" value="UniProtKB-UniRule"/>
</dbReference>
<dbReference type="GO" id="GO:0008465">
    <property type="term" value="F:hydroxypyruvate reductase (NADH) activity"/>
    <property type="evidence" value="ECO:0007669"/>
    <property type="project" value="RHEA"/>
</dbReference>
<dbReference type="GO" id="GO:0120509">
    <property type="term" value="F:hydroxypyruvate reductase (NADPH) activity"/>
    <property type="evidence" value="ECO:0007669"/>
    <property type="project" value="RHEA"/>
</dbReference>
<dbReference type="GO" id="GO:0051287">
    <property type="term" value="F:NAD binding"/>
    <property type="evidence" value="ECO:0007669"/>
    <property type="project" value="InterPro"/>
</dbReference>
<dbReference type="CDD" id="cd05301">
    <property type="entry name" value="GDH"/>
    <property type="match status" value="1"/>
</dbReference>
<dbReference type="FunFam" id="3.40.50.720:FF:000026">
    <property type="entry name" value="Glyoxylate/hydroxypyruvate reductase B"/>
    <property type="match status" value="1"/>
</dbReference>
<dbReference type="Gene3D" id="3.40.50.720">
    <property type="entry name" value="NAD(P)-binding Rossmann-like Domain"/>
    <property type="match status" value="2"/>
</dbReference>
<dbReference type="HAMAP" id="MF_01667">
    <property type="entry name" value="2_Hacid_dh_C_GhrB"/>
    <property type="match status" value="1"/>
</dbReference>
<dbReference type="InterPro" id="IPR050223">
    <property type="entry name" value="D-isomer_2-hydroxyacid_DH"/>
</dbReference>
<dbReference type="InterPro" id="IPR006139">
    <property type="entry name" value="D-isomer_2_OHA_DH_cat_dom"/>
</dbReference>
<dbReference type="InterPro" id="IPR029753">
    <property type="entry name" value="D-isomer_DH_CS"/>
</dbReference>
<dbReference type="InterPro" id="IPR029752">
    <property type="entry name" value="D-isomer_DH_CS1"/>
</dbReference>
<dbReference type="InterPro" id="IPR006140">
    <property type="entry name" value="D-isomer_DH_NAD-bd"/>
</dbReference>
<dbReference type="InterPro" id="IPR023756">
    <property type="entry name" value="Glyo/OHPyrv_Rdtase_B"/>
</dbReference>
<dbReference type="InterPro" id="IPR036291">
    <property type="entry name" value="NAD(P)-bd_dom_sf"/>
</dbReference>
<dbReference type="NCBIfam" id="NF011938">
    <property type="entry name" value="PRK15409.1"/>
    <property type="match status" value="1"/>
</dbReference>
<dbReference type="PANTHER" id="PTHR10996">
    <property type="entry name" value="2-HYDROXYACID DEHYDROGENASE-RELATED"/>
    <property type="match status" value="1"/>
</dbReference>
<dbReference type="PANTHER" id="PTHR10996:SF283">
    <property type="entry name" value="GLYOXYLATE_HYDROXYPYRUVATE REDUCTASE B"/>
    <property type="match status" value="1"/>
</dbReference>
<dbReference type="Pfam" id="PF00389">
    <property type="entry name" value="2-Hacid_dh"/>
    <property type="match status" value="1"/>
</dbReference>
<dbReference type="Pfam" id="PF02826">
    <property type="entry name" value="2-Hacid_dh_C"/>
    <property type="match status" value="1"/>
</dbReference>
<dbReference type="SUPFAM" id="SSF52283">
    <property type="entry name" value="Formate/glycerate dehydrogenase catalytic domain-like"/>
    <property type="match status" value="1"/>
</dbReference>
<dbReference type="SUPFAM" id="SSF51735">
    <property type="entry name" value="NAD(P)-binding Rossmann-fold domains"/>
    <property type="match status" value="1"/>
</dbReference>
<dbReference type="PROSITE" id="PS00065">
    <property type="entry name" value="D_2_HYDROXYACID_DH_1"/>
    <property type="match status" value="1"/>
</dbReference>
<dbReference type="PROSITE" id="PS00671">
    <property type="entry name" value="D_2_HYDROXYACID_DH_3"/>
    <property type="match status" value="1"/>
</dbReference>